<keyword id="KW-1003">Cell membrane</keyword>
<keyword id="KW-0966">Cell projection</keyword>
<keyword id="KW-0967">Endosome</keyword>
<keyword id="KW-0472">Membrane</keyword>
<keyword id="KW-0597">Phosphoprotein</keyword>
<keyword id="KW-0628">Postsynaptic cell membrane</keyword>
<keyword id="KW-1185">Reference proteome</keyword>
<keyword id="KW-0735">Signal-anchor</keyword>
<keyword id="KW-0770">Synapse</keyword>
<keyword id="KW-0812">Transmembrane</keyword>
<keyword id="KW-1133">Transmembrane helix</keyword>
<comment type="function">
    <text evidence="1">May regulate AMPA receptor content at nascent synapses, and have a role in postsynaptic development and maturation.</text>
</comment>
<comment type="subunit">
    <text evidence="1">Homodimer. Interacts with GRIA1 and GRIA2 (By similarity).</text>
</comment>
<comment type="subcellular location">
    <subcellularLocation>
        <location>Cell membrane</location>
        <topology>Single-pass type II membrane protein</topology>
    </subcellularLocation>
    <subcellularLocation>
        <location evidence="1">Early endosome membrane</location>
        <topology evidence="1">Single-pass type II membrane protein</topology>
    </subcellularLocation>
    <subcellularLocation>
        <location evidence="1">Postsynaptic density membrane</location>
    </subcellularLocation>
    <subcellularLocation>
        <location evidence="1">Synapse</location>
    </subcellularLocation>
    <subcellularLocation>
        <location evidence="1">Cell projection</location>
        <location evidence="1">Dendrite</location>
    </subcellularLocation>
    <subcellularLocation>
        <location evidence="1">Cell projection</location>
        <location evidence="1">Dendritic spine</location>
    </subcellularLocation>
    <text evidence="1">Shuttles between the cell surface and early endosome membrane.</text>
</comment>
<comment type="similarity">
    <text evidence="4">Belongs to the CD225/Dispanin family.</text>
</comment>
<name>SYNG1_BOVIN</name>
<evidence type="ECO:0000250" key="1"/>
<evidence type="ECO:0000250" key="2">
    <source>
        <dbReference type="UniProtKB" id="Q58DZ9"/>
    </source>
</evidence>
<evidence type="ECO:0000255" key="3"/>
<evidence type="ECO:0000305" key="4"/>
<feature type="chain" id="PRO_0000332728" description="Synapse differentiation-inducing gene protein 1">
    <location>
        <begin position="1"/>
        <end position="258"/>
    </location>
</feature>
<feature type="topological domain" description="Cytoplasmic" evidence="3">
    <location>
        <begin position="1"/>
        <end position="181"/>
    </location>
</feature>
<feature type="transmembrane region" description="Helical" evidence="3">
    <location>
        <begin position="182"/>
        <end position="202"/>
    </location>
</feature>
<feature type="topological domain" description="Extracellular" evidence="3">
    <location>
        <begin position="203"/>
        <end position="228"/>
    </location>
</feature>
<feature type="intramembrane region" description="Helical" evidence="3">
    <location>
        <begin position="229"/>
        <end position="249"/>
    </location>
</feature>
<feature type="topological domain" description="Extracellular" evidence="3">
    <location>
        <begin position="250"/>
        <end position="258"/>
    </location>
</feature>
<feature type="modified residue" description="Phosphoserine" evidence="2">
    <location>
        <position position="137"/>
    </location>
</feature>
<organism>
    <name type="scientific">Bos taurus</name>
    <name type="common">Bovine</name>
    <dbReference type="NCBI Taxonomy" id="9913"/>
    <lineage>
        <taxon>Eukaryota</taxon>
        <taxon>Metazoa</taxon>
        <taxon>Chordata</taxon>
        <taxon>Craniata</taxon>
        <taxon>Vertebrata</taxon>
        <taxon>Euteleostomi</taxon>
        <taxon>Mammalia</taxon>
        <taxon>Eutheria</taxon>
        <taxon>Laurasiatheria</taxon>
        <taxon>Artiodactyla</taxon>
        <taxon>Ruminantia</taxon>
        <taxon>Pecora</taxon>
        <taxon>Bovidae</taxon>
        <taxon>Bovinae</taxon>
        <taxon>Bos</taxon>
    </lineage>
</organism>
<proteinExistence type="evidence at transcript level"/>
<accession>Q08DM6</accession>
<protein>
    <recommendedName>
        <fullName>Synapse differentiation-inducing gene protein 1</fullName>
        <shortName>SynDIG1</shortName>
    </recommendedName>
    <alternativeName>
        <fullName>Dispanin subfamily C member 2</fullName>
        <shortName>DSPC2</shortName>
    </alternativeName>
    <alternativeName>
        <fullName>Transmembrane protein 90B</fullName>
    </alternativeName>
</protein>
<gene>
    <name type="primary">SYNDIG1</name>
    <name type="synonym">TMEM90B</name>
</gene>
<reference key="1">
    <citation type="submission" date="2006-09" db="EMBL/GenBank/DDBJ databases">
        <authorList>
            <consortium name="NIH - Mammalian Gene Collection (MGC) project"/>
        </authorList>
    </citation>
    <scope>NUCLEOTIDE SEQUENCE [LARGE SCALE MRNA]</scope>
    <source>
        <strain>Hereford</strain>
        <tissue>Brain cortex</tissue>
    </source>
</reference>
<reference key="2">
    <citation type="journal article" date="2012" name="PLoS ONE">
        <title>The dispanins: a novel gene family of ancient origin that contains 14 human members.</title>
        <authorList>
            <person name="Sallman Almen M."/>
            <person name="Bringeland N."/>
            <person name="Fredriksson R."/>
            <person name="Schioth H.B."/>
        </authorList>
    </citation>
    <scope>GENE FAMILY</scope>
</reference>
<dbReference type="EMBL" id="BC123666">
    <property type="protein sequence ID" value="AAI23667.1"/>
    <property type="molecule type" value="mRNA"/>
</dbReference>
<dbReference type="RefSeq" id="NP_001069731.1">
    <property type="nucleotide sequence ID" value="NM_001076263.1"/>
</dbReference>
<dbReference type="RefSeq" id="XP_010809590.1">
    <property type="nucleotide sequence ID" value="XM_010811288.3"/>
</dbReference>
<dbReference type="RefSeq" id="XP_015329551.1">
    <property type="nucleotide sequence ID" value="XM_015474065.1"/>
</dbReference>
<dbReference type="SMR" id="Q08DM6"/>
<dbReference type="FunCoup" id="Q08DM6">
    <property type="interactions" value="574"/>
</dbReference>
<dbReference type="STRING" id="9913.ENSBTAP00000063526"/>
<dbReference type="PaxDb" id="9913-ENSBTAP00000051406"/>
<dbReference type="Ensembl" id="ENSBTAT00000054611.3">
    <property type="protein sequence ID" value="ENSBTAP00000051406.2"/>
    <property type="gene ID" value="ENSBTAG00000040147.4"/>
</dbReference>
<dbReference type="GeneID" id="541217"/>
<dbReference type="KEGG" id="bta:541217"/>
<dbReference type="CTD" id="79953"/>
<dbReference type="VEuPathDB" id="HostDB:ENSBTAG00000040147"/>
<dbReference type="VGNC" id="VGNC:35519">
    <property type="gene designation" value="SYNDIG1"/>
</dbReference>
<dbReference type="eggNOG" id="ENOG502QQXK">
    <property type="taxonomic scope" value="Eukaryota"/>
</dbReference>
<dbReference type="GeneTree" id="ENSGT00950000183147"/>
<dbReference type="HOGENOM" id="CLU_094250_0_0_1"/>
<dbReference type="InParanoid" id="Q08DM6"/>
<dbReference type="OMA" id="SWGDGMA"/>
<dbReference type="OrthoDB" id="8440917at2759"/>
<dbReference type="TreeFam" id="TF331357"/>
<dbReference type="Proteomes" id="UP000009136">
    <property type="component" value="Chromosome 13"/>
</dbReference>
<dbReference type="Bgee" id="ENSBTAG00000040147">
    <property type="expression patterns" value="Expressed in cerebellum and 65 other cell types or tissues"/>
</dbReference>
<dbReference type="GO" id="GO:0044297">
    <property type="term" value="C:cell body"/>
    <property type="evidence" value="ECO:0000250"/>
    <property type="project" value="UniProtKB"/>
</dbReference>
<dbReference type="GO" id="GO:0043198">
    <property type="term" value="C:dendritic shaft"/>
    <property type="evidence" value="ECO:0000250"/>
    <property type="project" value="UniProtKB"/>
</dbReference>
<dbReference type="GO" id="GO:0043197">
    <property type="term" value="C:dendritic spine"/>
    <property type="evidence" value="ECO:0000250"/>
    <property type="project" value="UniProtKB"/>
</dbReference>
<dbReference type="GO" id="GO:0031901">
    <property type="term" value="C:early endosome membrane"/>
    <property type="evidence" value="ECO:0000250"/>
    <property type="project" value="UniProtKB"/>
</dbReference>
<dbReference type="GO" id="GO:0060076">
    <property type="term" value="C:excitatory synapse"/>
    <property type="evidence" value="ECO:0000250"/>
    <property type="project" value="UniProtKB"/>
</dbReference>
<dbReference type="GO" id="GO:0043231">
    <property type="term" value="C:intracellular membrane-bounded organelle"/>
    <property type="evidence" value="ECO:0000318"/>
    <property type="project" value="GO_Central"/>
</dbReference>
<dbReference type="GO" id="GO:0005886">
    <property type="term" value="C:plasma membrane"/>
    <property type="evidence" value="ECO:0000250"/>
    <property type="project" value="UniProtKB"/>
</dbReference>
<dbReference type="GO" id="GO:0014069">
    <property type="term" value="C:postsynaptic density"/>
    <property type="evidence" value="ECO:0000250"/>
    <property type="project" value="UniProtKB"/>
</dbReference>
<dbReference type="GO" id="GO:0098839">
    <property type="term" value="C:postsynaptic density membrane"/>
    <property type="evidence" value="ECO:0000318"/>
    <property type="project" value="GO_Central"/>
</dbReference>
<dbReference type="GO" id="GO:0030672">
    <property type="term" value="C:synaptic vesicle membrane"/>
    <property type="evidence" value="ECO:0000318"/>
    <property type="project" value="GO_Central"/>
</dbReference>
<dbReference type="GO" id="GO:0035254">
    <property type="term" value="F:glutamate receptor binding"/>
    <property type="evidence" value="ECO:0000250"/>
    <property type="project" value="UniProtKB"/>
</dbReference>
<dbReference type="GO" id="GO:0042803">
    <property type="term" value="F:protein homodimerization activity"/>
    <property type="evidence" value="ECO:0000250"/>
    <property type="project" value="UniProtKB"/>
</dbReference>
<dbReference type="GO" id="GO:0006886">
    <property type="term" value="P:intracellular protein transport"/>
    <property type="evidence" value="ECO:0000250"/>
    <property type="project" value="UniProtKB"/>
</dbReference>
<dbReference type="GO" id="GO:0051965">
    <property type="term" value="P:positive regulation of synapse assembly"/>
    <property type="evidence" value="ECO:0000250"/>
    <property type="project" value="UniProtKB"/>
</dbReference>
<dbReference type="GO" id="GO:0097091">
    <property type="term" value="P:synaptic vesicle clustering"/>
    <property type="evidence" value="ECO:0000250"/>
    <property type="project" value="UniProtKB"/>
</dbReference>
<dbReference type="InterPro" id="IPR007593">
    <property type="entry name" value="CD225/Dispanin_fam"/>
</dbReference>
<dbReference type="PANTHER" id="PTHR14768:SF3">
    <property type="entry name" value="SYNAPSE DIFFERENTIATION-INDUCING GENE PROTEIN 1"/>
    <property type="match status" value="1"/>
</dbReference>
<dbReference type="PANTHER" id="PTHR14768">
    <property type="entry name" value="UPF0338 PROTEIN"/>
    <property type="match status" value="1"/>
</dbReference>
<dbReference type="Pfam" id="PF04505">
    <property type="entry name" value="CD225"/>
    <property type="match status" value="1"/>
</dbReference>
<sequence length="258" mass="28334">MAGVVEQKSGLVRDKLGEASKRNGLINTRSLVAESRDGLVSVYPAPQYQSCRVVGSVASAGPDGARNEPLQQLLDPSTLQQSVESRYRPNLILYSESVLRPWGDGVAADCCETTFIEDRSPTKESLEYPDGKFIDLSPEDIKIHTLSYDVEEEEEFQELESDYSSDTESEDNFLVMPPRDHLGLSVFSMLCCFWPLGIAAFYLSHETNKAVAKGDFHQASTSSRRALFLAVLSITIGTGIYVGVAVALIAYLSKSNHL</sequence>